<evidence type="ECO:0000250" key="1"/>
<evidence type="ECO:0000250" key="2">
    <source>
        <dbReference type="UniProtKB" id="Q91VR8"/>
    </source>
</evidence>
<evidence type="ECO:0000255" key="3"/>
<evidence type="ECO:0000269" key="4">
    <source>
    </source>
</evidence>
<evidence type="ECO:0000269" key="5">
    <source>
    </source>
</evidence>
<evidence type="ECO:0000269" key="6">
    <source>
    </source>
</evidence>
<evidence type="ECO:0000303" key="7">
    <source ref="2"/>
</evidence>
<evidence type="ECO:0000305" key="8"/>
<evidence type="ECO:0007744" key="9">
    <source>
    </source>
</evidence>
<evidence type="ECO:0007744" key="10">
    <source>
    </source>
</evidence>
<evidence type="ECO:0007829" key="11">
    <source>
        <dbReference type="PDB" id="3P8C"/>
    </source>
</evidence>
<dbReference type="EMBL" id="AY148219">
    <property type="protein sequence ID" value="AAN60161.1"/>
    <property type="molecule type" value="mRNA"/>
</dbReference>
<dbReference type="EMBL" id="AY148220">
    <property type="protein sequence ID" value="AAN60162.1"/>
    <property type="molecule type" value="mRNA"/>
</dbReference>
<dbReference type="EMBL" id="AF161418">
    <property type="protein sequence ID" value="AAF28978.1"/>
    <property type="status" value="ALT_INIT"/>
    <property type="molecule type" value="mRNA"/>
</dbReference>
<dbReference type="EMBL" id="AK312155">
    <property type="protein sequence ID" value="BAG35089.1"/>
    <property type="molecule type" value="mRNA"/>
</dbReference>
<dbReference type="EMBL" id="CH471055">
    <property type="protein sequence ID" value="EAW64061.1"/>
    <property type="molecule type" value="Genomic_DNA"/>
</dbReference>
<dbReference type="EMBL" id="BC001067">
    <property type="protein sequence ID" value="AAH01067.1"/>
    <property type="molecule type" value="mRNA"/>
</dbReference>
<dbReference type="EMBL" id="BC007929">
    <property type="protein sequence ID" value="AAH07929.1"/>
    <property type="molecule type" value="mRNA"/>
</dbReference>
<dbReference type="EMBL" id="BC019303">
    <property type="protein sequence ID" value="AAH19303.1"/>
    <property type="molecule type" value="mRNA"/>
</dbReference>
<dbReference type="CCDS" id="CCDS54553.1">
    <molecule id="Q8WUW1-1"/>
</dbReference>
<dbReference type="RefSeq" id="NP_060932.2">
    <molecule id="Q8WUW1-1"/>
    <property type="nucleotide sequence ID" value="NM_018462.4"/>
</dbReference>
<dbReference type="PDB" id="3P8C">
    <property type="method" value="X-ray"/>
    <property type="resolution" value="2.29 A"/>
    <property type="chains" value="E=1-75"/>
</dbReference>
<dbReference type="PDB" id="4N78">
    <property type="method" value="X-ray"/>
    <property type="resolution" value="2.43 A"/>
    <property type="chains" value="E=1-75"/>
</dbReference>
<dbReference type="PDB" id="7USC">
    <property type="method" value="EM"/>
    <property type="resolution" value="3.00 A"/>
    <property type="chains" value="D=1-75"/>
</dbReference>
<dbReference type="PDB" id="7USD">
    <property type="method" value="EM"/>
    <property type="resolution" value="3.00 A"/>
    <property type="chains" value="D=1-75"/>
</dbReference>
<dbReference type="PDB" id="7USE">
    <property type="method" value="EM"/>
    <property type="resolution" value="3.00 A"/>
    <property type="chains" value="D=1-75"/>
</dbReference>
<dbReference type="PDBsum" id="3P8C"/>
<dbReference type="PDBsum" id="4N78"/>
<dbReference type="PDBsum" id="7USC"/>
<dbReference type="PDBsum" id="7USD"/>
<dbReference type="PDBsum" id="7USE"/>
<dbReference type="EMDB" id="EMD-26732"/>
<dbReference type="EMDB" id="EMD-26733"/>
<dbReference type="EMDB" id="EMD-26734"/>
<dbReference type="SMR" id="Q8WUW1"/>
<dbReference type="BioGRID" id="120947">
    <property type="interactions" value="127"/>
</dbReference>
<dbReference type="CORUM" id="Q8WUW1"/>
<dbReference type="DIP" id="DIP-41554N"/>
<dbReference type="FunCoup" id="Q8WUW1">
    <property type="interactions" value="1968"/>
</dbReference>
<dbReference type="IntAct" id="Q8WUW1">
    <property type="interactions" value="180"/>
</dbReference>
<dbReference type="MINT" id="Q8WUW1"/>
<dbReference type="STRING" id="9606.ENSP00000432472"/>
<dbReference type="ChEMBL" id="CHEMBL3758062"/>
<dbReference type="iPTMnet" id="Q8WUW1"/>
<dbReference type="MetOSite" id="Q8WUW1"/>
<dbReference type="PhosphoSitePlus" id="Q8WUW1"/>
<dbReference type="BioMuta" id="BRK1"/>
<dbReference type="DMDM" id="74730773"/>
<dbReference type="jPOST" id="Q8WUW1"/>
<dbReference type="MassIVE" id="Q8WUW1"/>
<dbReference type="PaxDb" id="9606-ENSP00000432472"/>
<dbReference type="PeptideAtlas" id="Q8WUW1"/>
<dbReference type="ProteomicsDB" id="74714">
    <molecule id="Q8WUW1-1"/>
</dbReference>
<dbReference type="ProteomicsDB" id="74715">
    <molecule id="Q8WUW1-2"/>
</dbReference>
<dbReference type="Pumba" id="Q8WUW1"/>
<dbReference type="TopDownProteomics" id="Q8WUW1-1">
    <molecule id="Q8WUW1-1"/>
</dbReference>
<dbReference type="TopDownProteomics" id="Q8WUW1-2">
    <molecule id="Q8WUW1-2"/>
</dbReference>
<dbReference type="Antibodypedia" id="53142">
    <property type="antibodies" value="95 antibodies from 24 providers"/>
</dbReference>
<dbReference type="DNASU" id="55845"/>
<dbReference type="Ensembl" id="ENST00000530758.2">
    <molecule id="Q8WUW1-1"/>
    <property type="protein sequence ID" value="ENSP00000432472.1"/>
    <property type="gene ID" value="ENSG00000254999.4"/>
</dbReference>
<dbReference type="GeneID" id="55845"/>
<dbReference type="KEGG" id="hsa:55845"/>
<dbReference type="MANE-Select" id="ENST00000530758.2">
    <property type="protein sequence ID" value="ENSP00000432472.1"/>
    <property type="RefSeq nucleotide sequence ID" value="NM_018462.5"/>
    <property type="RefSeq protein sequence ID" value="NP_060932.2"/>
</dbReference>
<dbReference type="UCSC" id="uc003bvb.4">
    <molecule id="Q8WUW1-1"/>
    <property type="organism name" value="human"/>
</dbReference>
<dbReference type="AGR" id="HGNC:23057"/>
<dbReference type="CTD" id="55845"/>
<dbReference type="DisGeNET" id="55845"/>
<dbReference type="GeneCards" id="BRK1"/>
<dbReference type="HGNC" id="HGNC:23057">
    <property type="gene designation" value="BRK1"/>
</dbReference>
<dbReference type="HPA" id="ENSG00000254999">
    <property type="expression patterns" value="Low tissue specificity"/>
</dbReference>
<dbReference type="MIM" id="611183">
    <property type="type" value="gene"/>
</dbReference>
<dbReference type="neXtProt" id="NX_Q8WUW1"/>
<dbReference type="OpenTargets" id="ENSG00000254999"/>
<dbReference type="PharmGKB" id="PA134866423"/>
<dbReference type="VEuPathDB" id="HostDB:ENSG00000254999"/>
<dbReference type="eggNOG" id="ENOG502S3PY">
    <property type="taxonomic scope" value="Eukaryota"/>
</dbReference>
<dbReference type="GeneTree" id="ENSGT00390000011082"/>
<dbReference type="HOGENOM" id="CLU_175202_0_0_1"/>
<dbReference type="InParanoid" id="Q8WUW1"/>
<dbReference type="OMA" id="WEQREFI"/>
<dbReference type="OrthoDB" id="1883432at2759"/>
<dbReference type="PAN-GO" id="Q8WUW1">
    <property type="GO annotations" value="3 GO annotations based on evolutionary models"/>
</dbReference>
<dbReference type="PhylomeDB" id="Q8WUW1"/>
<dbReference type="TreeFam" id="TF324876"/>
<dbReference type="PathwayCommons" id="Q8WUW1"/>
<dbReference type="Reactome" id="R-HSA-2029482">
    <property type="pathway name" value="Regulation of actin dynamics for phagocytic cup formation"/>
</dbReference>
<dbReference type="Reactome" id="R-HSA-4420097">
    <property type="pathway name" value="VEGFA-VEGFR2 Pathway"/>
</dbReference>
<dbReference type="Reactome" id="R-HSA-5663213">
    <property type="pathway name" value="RHO GTPases Activate WASPs and WAVEs"/>
</dbReference>
<dbReference type="Reactome" id="R-HSA-9013149">
    <property type="pathway name" value="RAC1 GTPase cycle"/>
</dbReference>
<dbReference type="Reactome" id="R-HSA-9013404">
    <property type="pathway name" value="RAC2 GTPase cycle"/>
</dbReference>
<dbReference type="Reactome" id="R-HSA-9013423">
    <property type="pathway name" value="RAC3 GTPase cycle"/>
</dbReference>
<dbReference type="Reactome" id="R-HSA-9664422">
    <property type="pathway name" value="FCGR3A-mediated phagocytosis"/>
</dbReference>
<dbReference type="SignaLink" id="Q8WUW1"/>
<dbReference type="SIGNOR" id="Q8WUW1"/>
<dbReference type="BioGRID-ORCS" id="55845">
    <property type="hits" value="198 hits in 1155 CRISPR screens"/>
</dbReference>
<dbReference type="ChiTaRS" id="BRK1">
    <property type="organism name" value="human"/>
</dbReference>
<dbReference type="EvolutionaryTrace" id="Q8WUW1"/>
<dbReference type="GeneWiki" id="C3orf10"/>
<dbReference type="GenomeRNAi" id="55845"/>
<dbReference type="Pharos" id="Q8WUW1">
    <property type="development level" value="Tbio"/>
</dbReference>
<dbReference type="PRO" id="PR:Q8WUW1"/>
<dbReference type="Proteomes" id="UP000005640">
    <property type="component" value="Chromosome 3"/>
</dbReference>
<dbReference type="RNAct" id="Q8WUW1">
    <property type="molecule type" value="protein"/>
</dbReference>
<dbReference type="Bgee" id="ENSG00000254999">
    <property type="expression patterns" value="Expressed in sperm and 187 other cell types or tissues"/>
</dbReference>
<dbReference type="GO" id="GO:0005856">
    <property type="term" value="C:cytoskeleton"/>
    <property type="evidence" value="ECO:0007669"/>
    <property type="project" value="UniProtKB-SubCell"/>
</dbReference>
<dbReference type="GO" id="GO:0005829">
    <property type="term" value="C:cytosol"/>
    <property type="evidence" value="ECO:0000304"/>
    <property type="project" value="Reactome"/>
</dbReference>
<dbReference type="GO" id="GO:0070062">
    <property type="term" value="C:extracellular exosome"/>
    <property type="evidence" value="ECO:0007005"/>
    <property type="project" value="UniProtKB"/>
</dbReference>
<dbReference type="GO" id="GO:0030027">
    <property type="term" value="C:lamellipodium"/>
    <property type="evidence" value="ECO:0000250"/>
    <property type="project" value="UniProtKB"/>
</dbReference>
<dbReference type="GO" id="GO:0031209">
    <property type="term" value="C:SCAR complex"/>
    <property type="evidence" value="ECO:0000314"/>
    <property type="project" value="UniProtKB"/>
</dbReference>
<dbReference type="GO" id="GO:0042802">
    <property type="term" value="F:identical protein binding"/>
    <property type="evidence" value="ECO:0000314"/>
    <property type="project" value="UniProtKB"/>
</dbReference>
<dbReference type="GO" id="GO:0044877">
    <property type="term" value="F:protein-containing complex binding"/>
    <property type="evidence" value="ECO:0000353"/>
    <property type="project" value="UniProtKB"/>
</dbReference>
<dbReference type="GO" id="GO:0007015">
    <property type="term" value="P:actin filament organization"/>
    <property type="evidence" value="ECO:0007669"/>
    <property type="project" value="InterPro"/>
</dbReference>
<dbReference type="GO" id="GO:0048870">
    <property type="term" value="P:cell motility"/>
    <property type="evidence" value="ECO:0000318"/>
    <property type="project" value="GO_Central"/>
</dbReference>
<dbReference type="GO" id="GO:0048144">
    <property type="term" value="P:fibroblast proliferation"/>
    <property type="evidence" value="ECO:0007669"/>
    <property type="project" value="Ensembl"/>
</dbReference>
<dbReference type="GO" id="GO:0001701">
    <property type="term" value="P:in utero embryonic development"/>
    <property type="evidence" value="ECO:0007669"/>
    <property type="project" value="Ensembl"/>
</dbReference>
<dbReference type="GO" id="GO:2000601">
    <property type="term" value="P:positive regulation of Arp2/3 complex-mediated actin nucleation"/>
    <property type="evidence" value="ECO:0000314"/>
    <property type="project" value="UniProtKB"/>
</dbReference>
<dbReference type="GO" id="GO:0048146">
    <property type="term" value="P:positive regulation of fibroblast proliferation"/>
    <property type="evidence" value="ECO:0007669"/>
    <property type="project" value="Ensembl"/>
</dbReference>
<dbReference type="GO" id="GO:0010592">
    <property type="term" value="P:positive regulation of lamellipodium assembly"/>
    <property type="evidence" value="ECO:0000314"/>
    <property type="project" value="ARUK-UCL"/>
</dbReference>
<dbReference type="GO" id="GO:0031334">
    <property type="term" value="P:positive regulation of protein-containing complex assembly"/>
    <property type="evidence" value="ECO:0000315"/>
    <property type="project" value="UniProtKB"/>
</dbReference>
<dbReference type="GO" id="GO:0016601">
    <property type="term" value="P:Rac protein signal transduction"/>
    <property type="evidence" value="ECO:0000314"/>
    <property type="project" value="UniProtKB"/>
</dbReference>
<dbReference type="GO" id="GO:0008064">
    <property type="term" value="P:regulation of actin polymerization or depolymerization"/>
    <property type="evidence" value="ECO:0000318"/>
    <property type="project" value="GO_Central"/>
</dbReference>
<dbReference type="FunFam" id="1.20.5.110:FF:000017">
    <property type="entry name" value="BRICK1, SCAR/WAVE actin-nucleating complex subunit"/>
    <property type="match status" value="1"/>
</dbReference>
<dbReference type="Gene3D" id="1.20.5.110">
    <property type="match status" value="1"/>
</dbReference>
<dbReference type="InterPro" id="IPR033378">
    <property type="entry name" value="BRICK1"/>
</dbReference>
<dbReference type="PANTHER" id="PTHR33668">
    <property type="entry name" value="PROTEIN BRICK1"/>
    <property type="match status" value="1"/>
</dbReference>
<dbReference type="PANTHER" id="PTHR33668:SF1">
    <property type="entry name" value="PROTEIN BRICK1"/>
    <property type="match status" value="1"/>
</dbReference>
<comment type="function">
    <text evidence="2 5">Involved in regulation of actin and microtubule organization. Part of a WAVE complex that activates the Arp2/3 complex. As component of the WAVE1 complex, required for BDNF-NTRK2 endocytic trafficking and signaling from early endosomes (By similarity).</text>
</comment>
<comment type="subunit">
    <text evidence="4 5 6">Homotrimer when in free form. Directly interacts with WASF2. Component of the WAVE1 complex composed of ABI2, CYFIP1 or CYFIP2, BRK1, NCKAP1 and WASF1/WAVE1. Within the complex, a heterodimer containing NCKAP1 and CYFIP1 interacts with a heterotrimer formed by WAVE1, ABI2 and BRK1.</text>
</comment>
<comment type="interaction">
    <interactant intactId="EBI-2837444">
        <id>Q8WUW1</id>
    </interactant>
    <interactant intactId="EBI-640741">
        <id>P01023</id>
        <label>A2M</label>
    </interactant>
    <organismsDiffer>false</organismsDiffer>
    <experiments>3</experiments>
</comment>
<comment type="interaction">
    <interactant intactId="EBI-2837444">
        <id>Q8WUW1</id>
    </interactant>
    <interactant intactId="EBI-11022349">
        <id>Q99996-3</id>
        <label>AKAP9</label>
    </interactant>
    <organismsDiffer>false</organismsDiffer>
    <experiments>3</experiments>
</comment>
<comment type="interaction">
    <interactant intactId="EBI-2837444">
        <id>Q8WUW1</id>
    </interactant>
    <interactant intactId="EBI-25891409">
        <id>Q99700-5</id>
        <label>ATXN2</label>
    </interactant>
    <organismsDiffer>false</organismsDiffer>
    <experiments>3</experiments>
</comment>
<comment type="interaction">
    <interactant intactId="EBI-2837444">
        <id>Q8WUW1</id>
    </interactant>
    <interactant intactId="EBI-10988864">
        <id>P46379-2</id>
        <label>BAG6</label>
    </interactant>
    <organismsDiffer>false</organismsDiffer>
    <experiments>3</experiments>
</comment>
<comment type="interaction">
    <interactant intactId="EBI-2837444">
        <id>Q8WUW1</id>
    </interactant>
    <interactant intactId="EBI-25895587">
        <id>O14874-2</id>
        <label>BCKDK</label>
    </interactant>
    <organismsDiffer>false</organismsDiffer>
    <experiments>3</experiments>
</comment>
<comment type="interaction">
    <interactant intactId="EBI-2837444">
        <id>Q8WUW1</id>
    </interactant>
    <interactant intactId="EBI-741210">
        <id>Q0VDD7</id>
        <label>BRME1</label>
    </interactant>
    <organismsDiffer>false</organismsDiffer>
    <experiments>3</experiments>
</comment>
<comment type="interaction">
    <interactant intactId="EBI-2837444">
        <id>Q8WUW1</id>
    </interactant>
    <interactant intactId="EBI-356687">
        <id>P40227</id>
        <label>CCT6A</label>
    </interactant>
    <organismsDiffer>false</organismsDiffer>
    <experiments>3</experiments>
</comment>
<comment type="interaction">
    <interactant intactId="EBI-2837444">
        <id>Q8WUW1</id>
    </interactant>
    <interactant intactId="EBI-2841876">
        <id>Q7L3B6</id>
        <label>CDC37L1</label>
    </interactant>
    <organismsDiffer>false</organismsDiffer>
    <experiments>3</experiments>
</comment>
<comment type="interaction">
    <interactant intactId="EBI-2837444">
        <id>Q8WUW1</id>
    </interactant>
    <interactant intactId="EBI-718615">
        <id>Q9H5F2</id>
        <label>CFAP68</label>
    </interactant>
    <organismsDiffer>false</organismsDiffer>
    <experiments>3</experiments>
</comment>
<comment type="interaction">
    <interactant intactId="EBI-2837444">
        <id>Q8WUW1</id>
    </interactant>
    <interactant intactId="EBI-8589586">
        <id>P09172</id>
        <label>DBH</label>
    </interactant>
    <organismsDiffer>false</organismsDiffer>
    <experiments>3</experiments>
</comment>
<comment type="interaction">
    <interactant intactId="EBI-2837444">
        <id>Q8WUW1</id>
    </interactant>
    <interactant intactId="EBI-25840379">
        <id>Q14203-5</id>
        <label>DCTN1</label>
    </interactant>
    <organismsDiffer>false</organismsDiffer>
    <experiments>3</experiments>
</comment>
<comment type="interaction">
    <interactant intactId="EBI-2837444">
        <id>Q8WUW1</id>
    </interactant>
    <interactant intactId="EBI-10976677">
        <id>G5E9A7</id>
        <label>DMWD</label>
    </interactant>
    <organismsDiffer>false</organismsDiffer>
    <experiments>3</experiments>
</comment>
<comment type="interaction">
    <interactant intactId="EBI-2837444">
        <id>Q8WUW1</id>
    </interactant>
    <interactant intactId="EBI-10968534">
        <id>P50570-2</id>
        <label>DNM2</label>
    </interactant>
    <organismsDiffer>false</organismsDiffer>
    <experiments>3</experiments>
</comment>
<comment type="interaction">
    <interactant intactId="EBI-2837444">
        <id>Q8WUW1</id>
    </interactant>
    <interactant intactId="EBI-21529239">
        <id>Q86TI2-2</id>
        <label>DPP9</label>
    </interactant>
    <organismsDiffer>false</organismsDiffer>
    <experiments>3</experiments>
</comment>
<comment type="interaction">
    <interactant intactId="EBI-2837444">
        <id>Q8WUW1</id>
    </interactant>
    <interactant intactId="EBI-465804">
        <id>Q96EV8</id>
        <label>DTNBP1</label>
    </interactant>
    <organismsDiffer>false</organismsDiffer>
    <experiments>4</experiments>
</comment>
<comment type="interaction">
    <interactant intactId="EBI-2837444">
        <id>Q8WUW1</id>
    </interactant>
    <interactant intactId="EBI-351467">
        <id>P26641</id>
        <label>EEF1G</label>
    </interactant>
    <organismsDiffer>false</organismsDiffer>
    <experiments>3</experiments>
</comment>
<comment type="interaction">
    <interactant intactId="EBI-2837444">
        <id>Q8WUW1</id>
    </interactant>
    <interactant intactId="EBI-744302">
        <id>P14136</id>
        <label>GFAP</label>
    </interactant>
    <organismsDiffer>false</organismsDiffer>
    <experiments>3</experiments>
</comment>
<comment type="interaction">
    <interactant intactId="EBI-2837444">
        <id>Q8WUW1</id>
    </interactant>
    <interactant intactId="EBI-747754">
        <id>P28799</id>
        <label>GRN</label>
    </interactant>
    <organismsDiffer>false</organismsDiffer>
    <experiments>3</experiments>
</comment>
<comment type="interaction">
    <interactant intactId="EBI-2837444">
        <id>Q8WUW1</id>
    </interactant>
    <interactant intactId="EBI-748664">
        <id>O75506</id>
        <label>HSBP1</label>
    </interactant>
    <organismsDiffer>false</organismsDiffer>
    <experiments>8</experiments>
</comment>
<comment type="interaction">
    <interactant intactId="EBI-2837444">
        <id>Q8WUW1</id>
    </interactant>
    <interactant intactId="EBI-466029">
        <id>P42858</id>
        <label>HTT</label>
    </interactant>
    <organismsDiffer>false</organismsDiffer>
    <experiments>6</experiments>
</comment>
<comment type="interaction">
    <interactant intactId="EBI-2837444">
        <id>Q8WUW1</id>
    </interactant>
    <interactant intactId="EBI-9091197">
        <id>Q8IY31-3</id>
        <label>IFT20</label>
    </interactant>
    <organismsDiffer>false</organismsDiffer>
    <experiments>3</experiments>
</comment>
<comment type="interaction">
    <interactant intactId="EBI-2837444">
        <id>Q8WUW1</id>
    </interactant>
    <interactant intactId="EBI-1055254">
        <id>Q8WXH2</id>
        <label>JPH3</label>
    </interactant>
    <organismsDiffer>false</organismsDiffer>
    <experiments>3</experiments>
</comment>
<comment type="interaction">
    <interactant intactId="EBI-2837444">
        <id>Q8WUW1</id>
    </interactant>
    <interactant intactId="EBI-10975473">
        <id>O60333-2</id>
        <label>KIF1B</label>
    </interactant>
    <organismsDiffer>false</organismsDiffer>
    <experiments>3</experiments>
</comment>
<comment type="interaction">
    <interactant intactId="EBI-2837444">
        <id>Q8WUW1</id>
    </interactant>
    <interactant intactId="EBI-948266">
        <id>O14901</id>
        <label>KLF11</label>
    </interactant>
    <organismsDiffer>false</organismsDiffer>
    <experiments>3</experiments>
</comment>
<comment type="interaction">
    <interactant intactId="EBI-2837444">
        <id>Q8WUW1</id>
    </interactant>
    <interactant intactId="EBI-723416">
        <id>Q15012</id>
        <label>LAPTM4A</label>
    </interactant>
    <organismsDiffer>false</organismsDiffer>
    <experiments>3</experiments>
</comment>
<comment type="interaction">
    <interactant intactId="EBI-2837444">
        <id>Q8WUW1</id>
    </interactant>
    <interactant intactId="EBI-6447163">
        <id>Q8N7X4</id>
        <label>MAGEB6</label>
    </interactant>
    <organismsDiffer>false</organismsDiffer>
    <experiments>3</experiments>
</comment>
<comment type="interaction">
    <interactant intactId="EBI-2837444">
        <id>Q8WUW1</id>
    </interactant>
    <interactant intactId="EBI-1189067">
        <id>P51608</id>
        <label>MECP2</label>
    </interactant>
    <organismsDiffer>false</organismsDiffer>
    <experiments>3</experiments>
</comment>
<comment type="interaction">
    <interactant intactId="EBI-2837444">
        <id>Q8WUW1</id>
    </interactant>
    <interactant intactId="EBI-719403">
        <id>O95563</id>
        <label>MPC2</label>
    </interactant>
    <organismsDiffer>false</organismsDiffer>
    <experiments>3</experiments>
</comment>
<comment type="interaction">
    <interactant intactId="EBI-2837444">
        <id>Q8WUW1</id>
    </interactant>
    <interactant intactId="EBI-995714">
        <id>Q9Y605</id>
        <label>MRFAP1</label>
    </interactant>
    <organismsDiffer>false</organismsDiffer>
    <experiments>6</experiments>
</comment>
<comment type="interaction">
    <interactant intactId="EBI-2837444">
        <id>Q8WUW1</id>
    </interactant>
    <interactant intactId="EBI-928842">
        <id>Q9GZM8</id>
        <label>NDEL1</label>
    </interactant>
    <organismsDiffer>false</organismsDiffer>
    <experiments>9</experiments>
</comment>
<comment type="interaction">
    <interactant intactId="EBI-2837444">
        <id>Q8WUW1</id>
    </interactant>
    <interactant intactId="EBI-713665">
        <id>P19404</id>
        <label>NDUFV2</label>
    </interactant>
    <organismsDiffer>false</organismsDiffer>
    <experiments>3</experiments>
</comment>
<comment type="interaction">
    <interactant intactId="EBI-2837444">
        <id>Q8WUW1</id>
    </interactant>
    <interactant intactId="EBI-744871">
        <id>O00746</id>
        <label>NME4</label>
    </interactant>
    <organismsDiffer>false</organismsDiffer>
    <experiments>3</experiments>
</comment>
<comment type="interaction">
    <interactant intactId="EBI-2837444">
        <id>Q8WUW1</id>
    </interactant>
    <interactant intactId="EBI-2811583">
        <id>Q9BVL2</id>
        <label>NUP58</label>
    </interactant>
    <organismsDiffer>false</organismsDiffer>
    <experiments>3</experiments>
</comment>
<comment type="interaction">
    <interactant intactId="EBI-2837444">
        <id>Q8WUW1</id>
    </interactant>
    <interactant intactId="EBI-1058491">
        <id>Q96FW1</id>
        <label>OTUB1</label>
    </interactant>
    <organismsDiffer>false</organismsDiffer>
    <experiments>3</experiments>
</comment>
<comment type="interaction">
    <interactant intactId="EBI-2837444">
        <id>Q8WUW1</id>
    </interactant>
    <interactant intactId="EBI-8677294">
        <id>P41231</id>
        <label>P2RY2</label>
    </interactant>
    <organismsDiffer>false</organismsDiffer>
    <experiments>3</experiments>
</comment>
<comment type="interaction">
    <interactant intactId="EBI-2837444">
        <id>Q8WUW1</id>
    </interactant>
    <interactant intactId="EBI-2557276">
        <id>O15534</id>
        <label>PER1</label>
    </interactant>
    <organismsDiffer>false</organismsDiffer>
    <experiments>3</experiments>
</comment>
<comment type="interaction">
    <interactant intactId="EBI-2837444">
        <id>Q8WUW1</id>
    </interactant>
    <interactant intactId="EBI-2339674">
        <id>Q5T6S3</id>
        <label>PHF19</label>
    </interactant>
    <organismsDiffer>false</organismsDiffer>
    <experiments>3</experiments>
</comment>
<comment type="interaction">
    <interactant intactId="EBI-2837444">
        <id>Q8WUW1</id>
    </interactant>
    <interactant intactId="EBI-50433196">
        <id>A0A6Q8PF08</id>
        <label>PMP22</label>
    </interactant>
    <organismsDiffer>false</organismsDiffer>
    <experiments>3</experiments>
</comment>
<comment type="interaction">
    <interactant intactId="EBI-2837444">
        <id>Q8WUW1</id>
    </interactant>
    <interactant intactId="EBI-21251460">
        <id>O60260-5</id>
        <label>PRKN</label>
    </interactant>
    <organismsDiffer>false</organismsDiffer>
    <experiments>3</experiments>
</comment>
<comment type="interaction">
    <interactant intactId="EBI-2837444">
        <id>Q8WUW1</id>
    </interactant>
    <interactant intactId="EBI-351098">
        <id>O14744</id>
        <label>PRMT5</label>
    </interactant>
    <organismsDiffer>false</organismsDiffer>
    <experiments>3</experiments>
</comment>
<comment type="interaction">
    <interactant intactId="EBI-2837444">
        <id>Q8WUW1</id>
    </interactant>
    <interactant intactId="EBI-752074">
        <id>P41219</id>
        <label>PRPH</label>
    </interactant>
    <organismsDiffer>false</organismsDiffer>
    <experiments>3</experiments>
</comment>
<comment type="interaction">
    <interactant intactId="EBI-2837444">
        <id>Q8WUW1</id>
    </interactant>
    <interactant intactId="EBI-10272071">
        <id>Q8TAS3</id>
        <label>PRRG2</label>
    </interactant>
    <organismsDiffer>false</organismsDiffer>
    <experiments>3</experiments>
</comment>
<comment type="interaction">
    <interactant intactId="EBI-2837444">
        <id>Q8WUW1</id>
    </interactant>
    <interactant intactId="EBI-396669">
        <id>Q9Y3C5</id>
        <label>RNF11</label>
    </interactant>
    <organismsDiffer>false</organismsDiffer>
    <experiments>3</experiments>
</comment>
<comment type="interaction">
    <interactant intactId="EBI-2837444">
        <id>Q8WUW1</id>
    </interactant>
    <interactant intactId="EBI-2372238">
        <id>Q5VTR2</id>
        <label>RNF20</label>
    </interactant>
    <organismsDiffer>false</organismsDiffer>
    <experiments>5</experiments>
</comment>
<comment type="interaction">
    <interactant intactId="EBI-2837444">
        <id>Q8WUW1</id>
    </interactant>
    <interactant intactId="EBI-752324">
        <id>Q8N488</id>
        <label>RYBP</label>
    </interactant>
    <organismsDiffer>false</organismsDiffer>
    <experiments>3</experiments>
</comment>
<comment type="interaction">
    <interactant intactId="EBI-2837444">
        <id>Q8WUW1</id>
    </interactant>
    <interactant intactId="EBI-985879">
        <id>P37840</id>
        <label>SNCA</label>
    </interactant>
    <organismsDiffer>false</organismsDiffer>
    <experiments>3</experiments>
</comment>
<comment type="interaction">
    <interactant intactId="EBI-2837444">
        <id>Q8WUW1</id>
    </interactant>
    <interactant intactId="EBI-12811275">
        <id>O95238</id>
        <label>SPDEF</label>
    </interactant>
    <organismsDiffer>false</organismsDiffer>
    <experiments>3</experiments>
</comment>
<comment type="interaction">
    <interactant intactId="EBI-2837444">
        <id>Q8WUW1</id>
    </interactant>
    <interactant intactId="EBI-8345366">
        <id>Q8TCT7-2</id>
        <label>SPPL2B</label>
    </interactant>
    <organismsDiffer>false</organismsDiffer>
    <experiments>3</experiments>
</comment>
<comment type="interaction">
    <interactant intactId="EBI-2837444">
        <id>Q8WUW1</id>
    </interactant>
    <interactant intactId="EBI-5235340">
        <id>Q7Z699</id>
        <label>SPRED1</label>
    </interactant>
    <organismsDiffer>false</organismsDiffer>
    <experiments>3</experiments>
</comment>
<comment type="interaction">
    <interactant intactId="EBI-2837444">
        <id>Q8WUW1</id>
    </interactant>
    <interactant intactId="EBI-1049822">
        <id>O60220</id>
        <label>TIMM8A</label>
    </interactant>
    <organismsDiffer>false</organismsDiffer>
    <experiments>3</experiments>
</comment>
<comment type="interaction">
    <interactant intactId="EBI-2837444">
        <id>Q8WUW1</id>
    </interactant>
    <interactant intactId="EBI-12892569">
        <id>Q3KNT9</id>
        <label>TMEM95</label>
    </interactant>
    <organismsDiffer>false</organismsDiffer>
    <experiments>3</experiments>
</comment>
<comment type="interaction">
    <interactant intactId="EBI-2837444">
        <id>Q8WUW1</id>
    </interactant>
    <interactant intactId="EBI-25895616">
        <id>P68363-2</id>
        <label>TUBA1B</label>
    </interactant>
    <organismsDiffer>false</organismsDiffer>
    <experiments>3</experiments>
</comment>
<comment type="interaction">
    <interactant intactId="EBI-2837444">
        <id>Q8WUW1</id>
    </interactant>
    <interactant intactId="EBI-473850">
        <id>P61086</id>
        <label>UBE2K</label>
    </interactant>
    <organismsDiffer>false</organismsDiffer>
    <experiments>3</experiments>
</comment>
<comment type="interaction">
    <interactant intactId="EBI-2837444">
        <id>Q8WUW1</id>
    </interactant>
    <interactant intactId="EBI-714860">
        <id>P09936</id>
        <label>UCHL1</label>
    </interactant>
    <organismsDiffer>false</organismsDiffer>
    <experiments>3</experiments>
</comment>
<comment type="interaction">
    <interactant intactId="EBI-2837444">
        <id>Q8WUW1</id>
    </interactant>
    <interactant intactId="EBI-354022">
        <id>P45880</id>
        <label>VDAC2</label>
    </interactant>
    <organismsDiffer>false</organismsDiffer>
    <experiments>3</experiments>
</comment>
<comment type="interaction">
    <interactant intactId="EBI-2837444">
        <id>Q8WUW1</id>
    </interactant>
    <interactant intactId="EBI-11337915">
        <id>Q8N0U8</id>
        <label>VKORC1L1</label>
    </interactant>
    <organismsDiffer>false</organismsDiffer>
    <experiments>3</experiments>
</comment>
<comment type="interaction">
    <interactant intactId="EBI-2837444">
        <id>Q8WUW1</id>
    </interactant>
    <interactant intactId="EBI-12175871">
        <id>Q8TCV5</id>
        <label>WFDC5</label>
    </interactant>
    <organismsDiffer>false</organismsDiffer>
    <experiments>3</experiments>
</comment>
<comment type="interaction">
    <interactant intactId="EBI-2837444">
        <id>Q8WUW1</id>
    </interactant>
    <interactant intactId="EBI-1054417">
        <id>Q9BRT8</id>
        <label>ZNG1A</label>
    </interactant>
    <organismsDiffer>false</organismsDiffer>
    <experiments>3</experiments>
</comment>
<comment type="interaction">
    <interactant intactId="EBI-2837444">
        <id>Q8WUW1</id>
    </interactant>
    <interactant intactId="EBI-347522">
        <id>O43257</id>
        <label>ZNHIT1</label>
    </interactant>
    <organismsDiffer>false</organismsDiffer>
    <experiments>3</experiments>
</comment>
<comment type="interaction">
    <interactant intactId="EBI-2837444">
        <id>Q8WUW1</id>
    </interactant>
    <interactant intactId="EBI-10259496">
        <id>Q86V28</id>
    </interactant>
    <organismsDiffer>false</organismsDiffer>
    <experiments>3</experiments>
</comment>
<comment type="subcellular location">
    <subcellularLocation>
        <location evidence="1">Cytoplasm</location>
        <location evidence="1">Cytoskeleton</location>
    </subcellularLocation>
</comment>
<comment type="alternative products">
    <event type="alternative splicing"/>
    <isoform>
        <id>Q8WUW1-1</id>
        <name>1</name>
        <sequence type="displayed"/>
    </isoform>
    <isoform>
        <id>Q8WUW1-2</id>
        <name>2</name>
        <sequence type="described" ref="VSP_024350"/>
    </isoform>
</comment>
<comment type="similarity">
    <text evidence="8">Belongs to the BRK1 family.</text>
</comment>
<comment type="sequence caution" evidence="8">
    <conflict type="erroneous initiation">
        <sequence resource="EMBL-CDS" id="AAF28978"/>
    </conflict>
    <text>Extended N-terminus.</text>
</comment>
<organism>
    <name type="scientific">Homo sapiens</name>
    <name type="common">Human</name>
    <dbReference type="NCBI Taxonomy" id="9606"/>
    <lineage>
        <taxon>Eukaryota</taxon>
        <taxon>Metazoa</taxon>
        <taxon>Chordata</taxon>
        <taxon>Craniata</taxon>
        <taxon>Vertebrata</taxon>
        <taxon>Euteleostomi</taxon>
        <taxon>Mammalia</taxon>
        <taxon>Eutheria</taxon>
        <taxon>Euarchontoglires</taxon>
        <taxon>Primates</taxon>
        <taxon>Haplorrhini</taxon>
        <taxon>Catarrhini</taxon>
        <taxon>Hominidae</taxon>
        <taxon>Homo</taxon>
    </lineage>
</organism>
<keyword id="KW-0002">3D-structure</keyword>
<keyword id="KW-0007">Acetylation</keyword>
<keyword id="KW-0025">Alternative splicing</keyword>
<keyword id="KW-0175">Coiled coil</keyword>
<keyword id="KW-0963">Cytoplasm</keyword>
<keyword id="KW-0206">Cytoskeleton</keyword>
<keyword id="KW-1267">Proteomics identification</keyword>
<keyword id="KW-1185">Reference proteome</keyword>
<proteinExistence type="evidence at protein level"/>
<feature type="initiator methionine" description="Removed" evidence="9 10">
    <location>
        <position position="1"/>
    </location>
</feature>
<feature type="chain" id="PRO_0000283646" description="Protein BRICK1">
    <location>
        <begin position="2"/>
        <end position="75"/>
    </location>
</feature>
<feature type="coiled-coil region" evidence="3">
    <location>
        <begin position="41"/>
        <end position="72"/>
    </location>
</feature>
<feature type="modified residue" description="N-acetylalanine" evidence="9 10">
    <location>
        <position position="2"/>
    </location>
</feature>
<feature type="splice variant" id="VSP_024350" description="In isoform 2." evidence="7">
    <original>T</original>
    <variation>TRTVPCCCWEVALHNTGHMGKAPAAFSSFLSP</variation>
    <location>
        <position position="75"/>
    </location>
</feature>
<feature type="helix" evidence="11">
    <location>
        <begin position="11"/>
        <end position="68"/>
    </location>
</feature>
<name>BRK1_HUMAN</name>
<accession>Q8WUW1</accession>
<accession>B2R5E2</accession>
<accession>Q9P082</accession>
<protein>
    <recommendedName>
        <fullName>Protein BRICK1</fullName>
        <shortName>BRK1</shortName>
    </recommendedName>
</protein>
<gene>
    <name type="primary">BRK1</name>
    <name type="synonym">C3orf10</name>
    <name type="ORF">HSPC300</name>
    <name type="ORF">MDS027</name>
</gene>
<reference key="1">
    <citation type="submission" date="2002-09" db="EMBL/GenBank/DDBJ databases">
        <authorList>
            <person name="Xu Q."/>
            <person name="Duan R."/>
            <person name="Huo Y."/>
            <person name="Fan B."/>
            <person name="Zhang K."/>
            <person name="Wu D."/>
        </authorList>
    </citation>
    <scope>NUCLEOTIDE SEQUENCE [MRNA] (ISOFORM 1)</scope>
    <source>
        <tissue>Fetal brain</tissue>
        <tissue>Lung</tissue>
    </source>
</reference>
<reference key="2">
    <citation type="submission" date="1999-05" db="EMBL/GenBank/DDBJ databases">
        <title>Human partial CDS from CD34+ stem cells.</title>
        <authorList>
            <person name="Ye M."/>
            <person name="Zhang Q.-H."/>
            <person name="Zhou J."/>
            <person name="Shen Y."/>
            <person name="Wu X.-Y."/>
            <person name="Guan Z.Q."/>
            <person name="Wang L."/>
            <person name="Fan H.-Y."/>
            <person name="Mao Y.-F."/>
            <person name="Dai M."/>
            <person name="Huang Q.-H."/>
            <person name="Chen S.-J."/>
            <person name="Chen Z."/>
        </authorList>
    </citation>
    <scope>NUCLEOTIDE SEQUENCE [LARGE SCALE MRNA] (ISOFORM 2)</scope>
    <source>
        <tissue>Umbilical cord blood</tissue>
    </source>
</reference>
<reference key="3">
    <citation type="journal article" date="2004" name="Nat. Genet.">
        <title>Complete sequencing and characterization of 21,243 full-length human cDNAs.</title>
        <authorList>
            <person name="Ota T."/>
            <person name="Suzuki Y."/>
            <person name="Nishikawa T."/>
            <person name="Otsuki T."/>
            <person name="Sugiyama T."/>
            <person name="Irie R."/>
            <person name="Wakamatsu A."/>
            <person name="Hayashi K."/>
            <person name="Sato H."/>
            <person name="Nagai K."/>
            <person name="Kimura K."/>
            <person name="Makita H."/>
            <person name="Sekine M."/>
            <person name="Obayashi M."/>
            <person name="Nishi T."/>
            <person name="Shibahara T."/>
            <person name="Tanaka T."/>
            <person name="Ishii S."/>
            <person name="Yamamoto J."/>
            <person name="Saito K."/>
            <person name="Kawai Y."/>
            <person name="Isono Y."/>
            <person name="Nakamura Y."/>
            <person name="Nagahari K."/>
            <person name="Murakami K."/>
            <person name="Yasuda T."/>
            <person name="Iwayanagi T."/>
            <person name="Wagatsuma M."/>
            <person name="Shiratori A."/>
            <person name="Sudo H."/>
            <person name="Hosoiri T."/>
            <person name="Kaku Y."/>
            <person name="Kodaira H."/>
            <person name="Kondo H."/>
            <person name="Sugawara M."/>
            <person name="Takahashi M."/>
            <person name="Kanda K."/>
            <person name="Yokoi T."/>
            <person name="Furuya T."/>
            <person name="Kikkawa E."/>
            <person name="Omura Y."/>
            <person name="Abe K."/>
            <person name="Kamihara K."/>
            <person name="Katsuta N."/>
            <person name="Sato K."/>
            <person name="Tanikawa M."/>
            <person name="Yamazaki M."/>
            <person name="Ninomiya K."/>
            <person name="Ishibashi T."/>
            <person name="Yamashita H."/>
            <person name="Murakawa K."/>
            <person name="Fujimori K."/>
            <person name="Tanai H."/>
            <person name="Kimata M."/>
            <person name="Watanabe M."/>
            <person name="Hiraoka S."/>
            <person name="Chiba Y."/>
            <person name="Ishida S."/>
            <person name="Ono Y."/>
            <person name="Takiguchi S."/>
            <person name="Watanabe S."/>
            <person name="Yosida M."/>
            <person name="Hotuta T."/>
            <person name="Kusano J."/>
            <person name="Kanehori K."/>
            <person name="Takahashi-Fujii A."/>
            <person name="Hara H."/>
            <person name="Tanase T.-O."/>
            <person name="Nomura Y."/>
            <person name="Togiya S."/>
            <person name="Komai F."/>
            <person name="Hara R."/>
            <person name="Takeuchi K."/>
            <person name="Arita M."/>
            <person name="Imose N."/>
            <person name="Musashino K."/>
            <person name="Yuuki H."/>
            <person name="Oshima A."/>
            <person name="Sasaki N."/>
            <person name="Aotsuka S."/>
            <person name="Yoshikawa Y."/>
            <person name="Matsunawa H."/>
            <person name="Ichihara T."/>
            <person name="Shiohata N."/>
            <person name="Sano S."/>
            <person name="Moriya S."/>
            <person name="Momiyama H."/>
            <person name="Satoh N."/>
            <person name="Takami S."/>
            <person name="Terashima Y."/>
            <person name="Suzuki O."/>
            <person name="Nakagawa S."/>
            <person name="Senoh A."/>
            <person name="Mizoguchi H."/>
            <person name="Goto Y."/>
            <person name="Shimizu F."/>
            <person name="Wakebe H."/>
            <person name="Hishigaki H."/>
            <person name="Watanabe T."/>
            <person name="Sugiyama A."/>
            <person name="Takemoto M."/>
            <person name="Kawakami B."/>
            <person name="Yamazaki M."/>
            <person name="Watanabe K."/>
            <person name="Kumagai A."/>
            <person name="Itakura S."/>
            <person name="Fukuzumi Y."/>
            <person name="Fujimori Y."/>
            <person name="Komiyama M."/>
            <person name="Tashiro H."/>
            <person name="Tanigami A."/>
            <person name="Fujiwara T."/>
            <person name="Ono T."/>
            <person name="Yamada K."/>
            <person name="Fujii Y."/>
            <person name="Ozaki K."/>
            <person name="Hirao M."/>
            <person name="Ohmori Y."/>
            <person name="Kawabata A."/>
            <person name="Hikiji T."/>
            <person name="Kobatake N."/>
            <person name="Inagaki H."/>
            <person name="Ikema Y."/>
            <person name="Okamoto S."/>
            <person name="Okitani R."/>
            <person name="Kawakami T."/>
            <person name="Noguchi S."/>
            <person name="Itoh T."/>
            <person name="Shigeta K."/>
            <person name="Senba T."/>
            <person name="Matsumura K."/>
            <person name="Nakajima Y."/>
            <person name="Mizuno T."/>
            <person name="Morinaga M."/>
            <person name="Sasaki M."/>
            <person name="Togashi T."/>
            <person name="Oyama M."/>
            <person name="Hata H."/>
            <person name="Watanabe M."/>
            <person name="Komatsu T."/>
            <person name="Mizushima-Sugano J."/>
            <person name="Satoh T."/>
            <person name="Shirai Y."/>
            <person name="Takahashi Y."/>
            <person name="Nakagawa K."/>
            <person name="Okumura K."/>
            <person name="Nagase T."/>
            <person name="Nomura N."/>
            <person name="Kikuchi H."/>
            <person name="Masuho Y."/>
            <person name="Yamashita R."/>
            <person name="Nakai K."/>
            <person name="Yada T."/>
            <person name="Nakamura Y."/>
            <person name="Ohara O."/>
            <person name="Isogai T."/>
            <person name="Sugano S."/>
        </authorList>
    </citation>
    <scope>NUCLEOTIDE SEQUENCE [LARGE SCALE MRNA] (ISOFORM 1)</scope>
    <source>
        <tissue>Hippocampus</tissue>
    </source>
</reference>
<reference key="4">
    <citation type="submission" date="2005-07" db="EMBL/GenBank/DDBJ databases">
        <authorList>
            <person name="Mural R.J."/>
            <person name="Istrail S."/>
            <person name="Sutton G.G."/>
            <person name="Florea L."/>
            <person name="Halpern A.L."/>
            <person name="Mobarry C.M."/>
            <person name="Lippert R."/>
            <person name="Walenz B."/>
            <person name="Shatkay H."/>
            <person name="Dew I."/>
            <person name="Miller J.R."/>
            <person name="Flanigan M.J."/>
            <person name="Edwards N.J."/>
            <person name="Bolanos R."/>
            <person name="Fasulo D."/>
            <person name="Halldorsson B.V."/>
            <person name="Hannenhalli S."/>
            <person name="Turner R."/>
            <person name="Yooseph S."/>
            <person name="Lu F."/>
            <person name="Nusskern D.R."/>
            <person name="Shue B.C."/>
            <person name="Zheng X.H."/>
            <person name="Zhong F."/>
            <person name="Delcher A.L."/>
            <person name="Huson D.H."/>
            <person name="Kravitz S.A."/>
            <person name="Mouchard L."/>
            <person name="Reinert K."/>
            <person name="Remington K.A."/>
            <person name="Clark A.G."/>
            <person name="Waterman M.S."/>
            <person name="Eichler E.E."/>
            <person name="Adams M.D."/>
            <person name="Hunkapiller M.W."/>
            <person name="Myers E.W."/>
            <person name="Venter J.C."/>
        </authorList>
    </citation>
    <scope>NUCLEOTIDE SEQUENCE [LARGE SCALE GENOMIC DNA]</scope>
</reference>
<reference key="5">
    <citation type="journal article" date="2004" name="Genome Res.">
        <title>The status, quality, and expansion of the NIH full-length cDNA project: the Mammalian Gene Collection (MGC).</title>
        <authorList>
            <consortium name="The MGC Project Team"/>
        </authorList>
    </citation>
    <scope>NUCLEOTIDE SEQUENCE [LARGE SCALE MRNA] (ISOFORM 1)</scope>
    <source>
        <tissue>Lung</tissue>
        <tissue>Lymph</tissue>
    </source>
</reference>
<reference key="6">
    <citation type="journal article" date="2004" name="Proc. Natl. Acad. Sci. U.S.A.">
        <title>Purification and architecture of the ubiquitous Wave complex.</title>
        <authorList>
            <person name="Gautreau A."/>
            <person name="Ho H.-Y."/>
            <person name="Li J."/>
            <person name="Steen H."/>
            <person name="Gygi S.P."/>
            <person name="Kirschner M.W."/>
        </authorList>
    </citation>
    <scope>INTERACTION WITH WASF2</scope>
</reference>
<reference key="7">
    <citation type="journal article" date="2008" name="PLoS ONE">
        <title>Free Brick1 is a trimeric precursor in the assembly of a functional wave complex.</title>
        <authorList>
            <person name="Derivery E."/>
            <person name="Fink J."/>
            <person name="Martin D."/>
            <person name="Houdusse A."/>
            <person name="Piel M."/>
            <person name="Stradal T.E."/>
            <person name="Louvard D."/>
            <person name="Gautreau A."/>
        </authorList>
    </citation>
    <scope>FUNCTION</scope>
    <scope>SUBUNIT</scope>
</reference>
<reference key="8">
    <citation type="journal article" date="2009" name="Anal. Chem.">
        <title>Lys-N and trypsin cover complementary parts of the phosphoproteome in a refined SCX-based approach.</title>
        <authorList>
            <person name="Gauci S."/>
            <person name="Helbig A.O."/>
            <person name="Slijper M."/>
            <person name="Krijgsveld J."/>
            <person name="Heck A.J."/>
            <person name="Mohammed S."/>
        </authorList>
    </citation>
    <scope>ACETYLATION [LARGE SCALE ANALYSIS] AT ALA-2</scope>
    <scope>CLEAVAGE OF INITIATOR METHIONINE [LARGE SCALE ANALYSIS]</scope>
    <scope>IDENTIFICATION BY MASS SPECTROMETRY [LARGE SCALE ANALYSIS]</scope>
</reference>
<reference key="9">
    <citation type="journal article" date="2011" name="BMC Syst. Biol.">
        <title>Initial characterization of the human central proteome.</title>
        <authorList>
            <person name="Burkard T.R."/>
            <person name="Planyavsky M."/>
            <person name="Kaupe I."/>
            <person name="Breitwieser F.P."/>
            <person name="Buerckstuemmer T."/>
            <person name="Bennett K.L."/>
            <person name="Superti-Furga G."/>
            <person name="Colinge J."/>
        </authorList>
    </citation>
    <scope>IDENTIFICATION BY MASS SPECTROMETRY [LARGE SCALE ANALYSIS]</scope>
</reference>
<reference key="10">
    <citation type="journal article" date="2012" name="Proc. Natl. Acad. Sci. U.S.A.">
        <title>N-terminal acetylome analyses and functional insights of the N-terminal acetyltransferase NatB.</title>
        <authorList>
            <person name="Van Damme P."/>
            <person name="Lasa M."/>
            <person name="Polevoda B."/>
            <person name="Gazquez C."/>
            <person name="Elosegui-Artola A."/>
            <person name="Kim D.S."/>
            <person name="De Juan-Pardo E."/>
            <person name="Demeyer K."/>
            <person name="Hole K."/>
            <person name="Larrea E."/>
            <person name="Timmerman E."/>
            <person name="Prieto J."/>
            <person name="Arnesen T."/>
            <person name="Sherman F."/>
            <person name="Gevaert K."/>
            <person name="Aldabe R."/>
        </authorList>
    </citation>
    <scope>ACETYLATION [LARGE SCALE ANALYSIS] AT ALA-2</scope>
    <scope>CLEAVAGE OF INITIATOR METHIONINE [LARGE SCALE ANALYSIS]</scope>
    <scope>IDENTIFICATION BY MASS SPECTROMETRY [LARGE SCALE ANALYSIS]</scope>
</reference>
<reference key="11">
    <citation type="journal article" date="2010" name="Nature">
        <title>Structure and control of the actin regulatory WAVE complex.</title>
        <authorList>
            <person name="Chen Z."/>
            <person name="Borek D."/>
            <person name="Padrick S.B."/>
            <person name="Gomez T.S."/>
            <person name="Metlagel Z."/>
            <person name="Ismail A.M."/>
            <person name="Umetani J."/>
            <person name="Billadeau D.D."/>
            <person name="Otwinowski Z."/>
            <person name="Rosen M.K."/>
        </authorList>
    </citation>
    <scope>X-RAY CRYSTALLOGRAPHY (2.29 ANGSTROMS) OF WAVE1 COMPLEX</scope>
    <scope>SUBUNIT</scope>
</reference>
<sequence length="75" mass="8745">MAGQEDPVQREIHQDWANREYIEIITSSIKKIADFLNSFDMSCRSRLATLNEKLTALERRIEYIEARVTKGETLT</sequence>